<keyword id="KW-0002">3D-structure</keyword>
<keyword id="KW-0479">Metal-binding</keyword>
<keyword id="KW-0560">Oxidoreductase</keyword>
<keyword id="KW-1185">Reference proteome</keyword>
<keyword id="KW-0862">Zinc</keyword>
<feature type="chain" id="PRO_0000160892" description="Uncharacterized zinc-type alcohol dehydrogenase-like protein YdjJ">
    <location>
        <begin position="1"/>
        <end position="347"/>
    </location>
</feature>
<feature type="binding site" evidence="1">
    <location>
        <position position="39"/>
    </location>
    <ligand>
        <name>Zn(2+)</name>
        <dbReference type="ChEBI" id="CHEBI:29105"/>
        <label>1</label>
        <note>catalytic</note>
    </ligand>
</feature>
<feature type="binding site" evidence="1">
    <location>
        <position position="65"/>
    </location>
    <ligand>
        <name>Zn(2+)</name>
        <dbReference type="ChEBI" id="CHEBI:29105"/>
        <label>1</label>
        <note>catalytic</note>
    </ligand>
</feature>
<feature type="binding site" evidence="1">
    <location>
        <position position="95"/>
    </location>
    <ligand>
        <name>Zn(2+)</name>
        <dbReference type="ChEBI" id="CHEBI:29105"/>
        <label>2</label>
    </ligand>
</feature>
<feature type="binding site" evidence="1">
    <location>
        <position position="98"/>
    </location>
    <ligand>
        <name>Zn(2+)</name>
        <dbReference type="ChEBI" id="CHEBI:29105"/>
        <label>2</label>
    </ligand>
</feature>
<feature type="binding site" evidence="1">
    <location>
        <position position="101"/>
    </location>
    <ligand>
        <name>Zn(2+)</name>
        <dbReference type="ChEBI" id="CHEBI:29105"/>
        <label>2</label>
    </ligand>
</feature>
<feature type="binding site" evidence="1">
    <location>
        <position position="109"/>
    </location>
    <ligand>
        <name>Zn(2+)</name>
        <dbReference type="ChEBI" id="CHEBI:29105"/>
        <label>2</label>
    </ligand>
</feature>
<feature type="binding site" evidence="1">
    <location>
        <position position="152"/>
    </location>
    <ligand>
        <name>Zn(2+)</name>
        <dbReference type="ChEBI" id="CHEBI:29105"/>
        <label>1</label>
        <note>catalytic</note>
    </ligand>
</feature>
<feature type="strand" evidence="3">
    <location>
        <begin position="3"/>
        <end position="10"/>
    </location>
</feature>
<feature type="strand" evidence="3">
    <location>
        <begin position="13"/>
        <end position="19"/>
    </location>
</feature>
<feature type="strand" evidence="3">
    <location>
        <begin position="28"/>
        <end position="38"/>
    </location>
</feature>
<feature type="helix" evidence="3">
    <location>
        <begin position="40"/>
        <end position="48"/>
    </location>
</feature>
<feature type="strand" evidence="3">
    <location>
        <begin position="67"/>
        <end position="74"/>
    </location>
</feature>
<feature type="strand" evidence="3">
    <location>
        <begin position="86"/>
        <end position="89"/>
    </location>
</feature>
<feature type="strand" evidence="3">
    <location>
        <begin position="91"/>
        <end position="93"/>
    </location>
</feature>
<feature type="strand" evidence="3">
    <location>
        <begin position="96"/>
        <end position="98"/>
    </location>
</feature>
<feature type="helix" evidence="3">
    <location>
        <begin position="99"/>
        <end position="102"/>
    </location>
</feature>
<feature type="helix" evidence="3">
    <location>
        <begin position="106"/>
        <end position="108"/>
    </location>
</feature>
<feature type="turn" evidence="3">
    <location>
        <begin position="118"/>
        <end position="120"/>
    </location>
</feature>
<feature type="strand" evidence="3">
    <location>
        <begin position="126"/>
        <end position="132"/>
    </location>
</feature>
<feature type="helix" evidence="3">
    <location>
        <begin position="133"/>
        <end position="135"/>
    </location>
</feature>
<feature type="strand" evidence="3">
    <location>
        <begin position="136"/>
        <end position="138"/>
    </location>
</feature>
<feature type="helix" evidence="3">
    <location>
        <begin position="145"/>
        <end position="163"/>
    </location>
</feature>
<feature type="strand" evidence="3">
    <location>
        <begin position="171"/>
        <end position="175"/>
    </location>
</feature>
<feature type="helix" evidence="3">
    <location>
        <begin position="179"/>
        <end position="190"/>
    </location>
</feature>
<feature type="strand" evidence="3">
    <location>
        <begin position="195"/>
        <end position="201"/>
    </location>
</feature>
<feature type="helix" evidence="3">
    <location>
        <begin position="203"/>
        <end position="211"/>
    </location>
</feature>
<feature type="strand" evidence="3">
    <location>
        <begin position="215"/>
        <end position="219"/>
    </location>
</feature>
<feature type="turn" evidence="3">
    <location>
        <begin position="220"/>
        <end position="222"/>
    </location>
</feature>
<feature type="helix" evidence="3">
    <location>
        <begin position="225"/>
        <end position="232"/>
    </location>
</feature>
<feature type="turn" evidence="3">
    <location>
        <begin position="233"/>
        <end position="235"/>
    </location>
</feature>
<feature type="strand" evidence="3">
    <location>
        <begin position="238"/>
        <end position="243"/>
    </location>
</feature>
<feature type="helix" evidence="3">
    <location>
        <begin position="248"/>
        <end position="253"/>
    </location>
</feature>
<feature type="helix" evidence="3">
    <location>
        <begin position="254"/>
        <end position="256"/>
    </location>
</feature>
<feature type="strand" evidence="3">
    <location>
        <begin position="258"/>
        <end position="268"/>
    </location>
</feature>
<feature type="helix" evidence="3">
    <location>
        <begin position="278"/>
        <end position="281"/>
    </location>
</feature>
<feature type="turn" evidence="3">
    <location>
        <begin position="282"/>
        <end position="284"/>
    </location>
</feature>
<feature type="strand" evidence="3">
    <location>
        <begin position="286"/>
        <end position="290"/>
    </location>
</feature>
<feature type="helix" evidence="3">
    <location>
        <begin position="297"/>
        <end position="305"/>
    </location>
</feature>
<feature type="helix" evidence="3">
    <location>
        <begin position="312"/>
        <end position="314"/>
    </location>
</feature>
<feature type="strand" evidence="3">
    <location>
        <begin position="315"/>
        <end position="320"/>
    </location>
</feature>
<feature type="helix" evidence="3">
    <location>
        <begin position="321"/>
        <end position="323"/>
    </location>
</feature>
<feature type="helix" evidence="3">
    <location>
        <begin position="324"/>
        <end position="333"/>
    </location>
</feature>
<feature type="helix" evidence="3">
    <location>
        <begin position="335"/>
        <end position="337"/>
    </location>
</feature>
<feature type="strand" evidence="3">
    <location>
        <begin position="339"/>
        <end position="344"/>
    </location>
</feature>
<evidence type="ECO:0000250" key="1"/>
<evidence type="ECO:0000305" key="2"/>
<evidence type="ECO:0007829" key="3">
    <source>
        <dbReference type="PDB" id="5VM2"/>
    </source>
</evidence>
<gene>
    <name type="primary">ydjJ</name>
    <name type="ordered locus">b1774</name>
    <name type="ordered locus">JW1763</name>
</gene>
<name>YDJJ_ECOLI</name>
<dbReference type="EC" id="1.-.-.-"/>
<dbReference type="EMBL" id="U00096">
    <property type="protein sequence ID" value="AAC74844.1"/>
    <property type="molecule type" value="Genomic_DNA"/>
</dbReference>
<dbReference type="EMBL" id="AP009048">
    <property type="protein sequence ID" value="BAA15572.1"/>
    <property type="molecule type" value="Genomic_DNA"/>
</dbReference>
<dbReference type="PIR" id="F64937">
    <property type="entry name" value="F64937"/>
</dbReference>
<dbReference type="RefSeq" id="NP_416288.1">
    <property type="nucleotide sequence ID" value="NC_000913.3"/>
</dbReference>
<dbReference type="RefSeq" id="WP_000798110.1">
    <property type="nucleotide sequence ID" value="NZ_SSZK01000001.1"/>
</dbReference>
<dbReference type="PDB" id="5VM2">
    <property type="method" value="X-ray"/>
    <property type="resolution" value="1.98 A"/>
    <property type="chains" value="A/B=1-347"/>
</dbReference>
<dbReference type="PDBsum" id="5VM2"/>
<dbReference type="SMR" id="P77280"/>
<dbReference type="BioGRID" id="4260306">
    <property type="interactions" value="432"/>
</dbReference>
<dbReference type="FunCoup" id="P77280">
    <property type="interactions" value="550"/>
</dbReference>
<dbReference type="IntAct" id="P77280">
    <property type="interactions" value="9"/>
</dbReference>
<dbReference type="STRING" id="511145.b1774"/>
<dbReference type="jPOST" id="P77280"/>
<dbReference type="PaxDb" id="511145-b1774"/>
<dbReference type="EnsemblBacteria" id="AAC74844">
    <property type="protein sequence ID" value="AAC74844"/>
    <property type="gene ID" value="b1774"/>
</dbReference>
<dbReference type="GeneID" id="946292"/>
<dbReference type="KEGG" id="ecj:JW1763"/>
<dbReference type="KEGG" id="eco:b1774"/>
<dbReference type="KEGG" id="ecoc:C3026_10125"/>
<dbReference type="PATRIC" id="fig|1411691.4.peg.480"/>
<dbReference type="EchoBASE" id="EB3259"/>
<dbReference type="eggNOG" id="COG1063">
    <property type="taxonomic scope" value="Bacteria"/>
</dbReference>
<dbReference type="HOGENOM" id="CLU_026673_11_5_6"/>
<dbReference type="InParanoid" id="P77280"/>
<dbReference type="OMA" id="MRVAMYY"/>
<dbReference type="OrthoDB" id="9773078at2"/>
<dbReference type="PhylomeDB" id="P77280"/>
<dbReference type="BioCyc" id="EcoCyc:G6961-MONOMER"/>
<dbReference type="PRO" id="PR:P77280"/>
<dbReference type="Proteomes" id="UP000000625">
    <property type="component" value="Chromosome"/>
</dbReference>
<dbReference type="GO" id="GO:0016616">
    <property type="term" value="F:oxidoreductase activity, acting on the CH-OH group of donors, NAD or NADP as acceptor"/>
    <property type="evidence" value="ECO:0007669"/>
    <property type="project" value="InterPro"/>
</dbReference>
<dbReference type="GO" id="GO:0008270">
    <property type="term" value="F:zinc ion binding"/>
    <property type="evidence" value="ECO:0007669"/>
    <property type="project" value="InterPro"/>
</dbReference>
<dbReference type="CDD" id="cd05285">
    <property type="entry name" value="sorbitol_DH"/>
    <property type="match status" value="1"/>
</dbReference>
<dbReference type="Gene3D" id="3.90.180.10">
    <property type="entry name" value="Medium-chain alcohol dehydrogenases, catalytic domain"/>
    <property type="match status" value="1"/>
</dbReference>
<dbReference type="Gene3D" id="3.40.50.720">
    <property type="entry name" value="NAD(P)-binding Rossmann-like Domain"/>
    <property type="match status" value="1"/>
</dbReference>
<dbReference type="InterPro" id="IPR013149">
    <property type="entry name" value="ADH-like_C"/>
</dbReference>
<dbReference type="InterPro" id="IPR013154">
    <property type="entry name" value="ADH-like_N"/>
</dbReference>
<dbReference type="InterPro" id="IPR002328">
    <property type="entry name" value="ADH_Zn_CS"/>
</dbReference>
<dbReference type="InterPro" id="IPR011032">
    <property type="entry name" value="GroES-like_sf"/>
</dbReference>
<dbReference type="InterPro" id="IPR036291">
    <property type="entry name" value="NAD(P)-bd_dom_sf"/>
</dbReference>
<dbReference type="InterPro" id="IPR020843">
    <property type="entry name" value="PKS_ER"/>
</dbReference>
<dbReference type="InterPro" id="IPR045306">
    <property type="entry name" value="SDH-like"/>
</dbReference>
<dbReference type="PANTHER" id="PTHR43161">
    <property type="entry name" value="SORBITOL DEHYDROGENASE"/>
    <property type="match status" value="1"/>
</dbReference>
<dbReference type="PANTHER" id="PTHR43161:SF9">
    <property type="entry name" value="SORBITOL DEHYDROGENASE"/>
    <property type="match status" value="1"/>
</dbReference>
<dbReference type="Pfam" id="PF08240">
    <property type="entry name" value="ADH_N"/>
    <property type="match status" value="1"/>
</dbReference>
<dbReference type="Pfam" id="PF00107">
    <property type="entry name" value="ADH_zinc_N"/>
    <property type="match status" value="1"/>
</dbReference>
<dbReference type="SMART" id="SM00829">
    <property type="entry name" value="PKS_ER"/>
    <property type="match status" value="1"/>
</dbReference>
<dbReference type="SUPFAM" id="SSF50129">
    <property type="entry name" value="GroES-like"/>
    <property type="match status" value="1"/>
</dbReference>
<dbReference type="SUPFAM" id="SSF51735">
    <property type="entry name" value="NAD(P)-binding Rossmann-fold domains"/>
    <property type="match status" value="1"/>
</dbReference>
<dbReference type="PROSITE" id="PS00059">
    <property type="entry name" value="ADH_ZINC"/>
    <property type="match status" value="1"/>
</dbReference>
<sequence length="347" mass="37701">MKNSKAILQVPGTMKIISAEIPVPKEDEVLIKVEYVGICGSDVHGFESGPFIPPKDPNQEIGLGHECAGTVVAVGSRVRKFKPGDRVNIEPGVPCGHCRYCLEGKYNICPDVDFMATQPNYRGALTHYLCHPESFTYKLPDNMDTMEGALVEPAAVGMHAAMLADVKPGKKIIILGAGCIGLMTLQACKCLGATEIAVVDVLEKRLAMAEQLGATVVINGAKEDTIARCQQFTEDMGADIVFETAGSAVTVKQAPYLVMRGGKIMIVGTVPGDSAINFLKINREVTIQTVFRYANRYPVTIEAISSGRFDVKSMVTHIYDYRDVQQAFEESVNNKRDIIKGVIKISD</sequence>
<accession>P77280</accession>
<accession>P78174</accession>
<organism>
    <name type="scientific">Escherichia coli (strain K12)</name>
    <dbReference type="NCBI Taxonomy" id="83333"/>
    <lineage>
        <taxon>Bacteria</taxon>
        <taxon>Pseudomonadati</taxon>
        <taxon>Pseudomonadota</taxon>
        <taxon>Gammaproteobacteria</taxon>
        <taxon>Enterobacterales</taxon>
        <taxon>Enterobacteriaceae</taxon>
        <taxon>Escherichia</taxon>
    </lineage>
</organism>
<comment type="cofactor">
    <cofactor evidence="1">
        <name>Zn(2+)</name>
        <dbReference type="ChEBI" id="CHEBI:29105"/>
    </cofactor>
    <text evidence="1">Binds 2 Zn(2+) ions per subunit.</text>
</comment>
<comment type="similarity">
    <text evidence="2">Belongs to the zinc-containing alcohol dehydrogenase family.</text>
</comment>
<proteinExistence type="evidence at protein level"/>
<protein>
    <recommendedName>
        <fullName>Uncharacterized zinc-type alcohol dehydrogenase-like protein YdjJ</fullName>
        <ecNumber>1.-.-.-</ecNumber>
    </recommendedName>
</protein>
<reference key="1">
    <citation type="journal article" date="1996" name="DNA Res.">
        <title>A 570-kb DNA sequence of the Escherichia coli K-12 genome corresponding to the 28.0-40.1 min region on the linkage map.</title>
        <authorList>
            <person name="Aiba H."/>
            <person name="Baba T."/>
            <person name="Fujita K."/>
            <person name="Hayashi K."/>
            <person name="Inada T."/>
            <person name="Isono K."/>
            <person name="Itoh T."/>
            <person name="Kasai H."/>
            <person name="Kashimoto K."/>
            <person name="Kimura S."/>
            <person name="Kitakawa M."/>
            <person name="Kitagawa M."/>
            <person name="Makino K."/>
            <person name="Miki T."/>
            <person name="Mizobuchi K."/>
            <person name="Mori H."/>
            <person name="Mori T."/>
            <person name="Motomura K."/>
            <person name="Nakade S."/>
            <person name="Nakamura Y."/>
            <person name="Nashimoto H."/>
            <person name="Nishio Y."/>
            <person name="Oshima T."/>
            <person name="Saito N."/>
            <person name="Sampei G."/>
            <person name="Seki Y."/>
            <person name="Sivasundaram S."/>
            <person name="Tagami H."/>
            <person name="Takeda J."/>
            <person name="Takemoto K."/>
            <person name="Takeuchi Y."/>
            <person name="Wada C."/>
            <person name="Yamamoto Y."/>
            <person name="Horiuchi T."/>
        </authorList>
    </citation>
    <scope>NUCLEOTIDE SEQUENCE [LARGE SCALE GENOMIC DNA]</scope>
    <source>
        <strain>K12 / W3110 / ATCC 27325 / DSM 5911</strain>
    </source>
</reference>
<reference key="2">
    <citation type="journal article" date="1997" name="Science">
        <title>The complete genome sequence of Escherichia coli K-12.</title>
        <authorList>
            <person name="Blattner F.R."/>
            <person name="Plunkett G. III"/>
            <person name="Bloch C.A."/>
            <person name="Perna N.T."/>
            <person name="Burland V."/>
            <person name="Riley M."/>
            <person name="Collado-Vides J."/>
            <person name="Glasner J.D."/>
            <person name="Rode C.K."/>
            <person name="Mayhew G.F."/>
            <person name="Gregor J."/>
            <person name="Davis N.W."/>
            <person name="Kirkpatrick H.A."/>
            <person name="Goeden M.A."/>
            <person name="Rose D.J."/>
            <person name="Mau B."/>
            <person name="Shao Y."/>
        </authorList>
    </citation>
    <scope>NUCLEOTIDE SEQUENCE [LARGE SCALE GENOMIC DNA]</scope>
    <source>
        <strain>K12 / MG1655 / ATCC 47076</strain>
    </source>
</reference>
<reference key="3">
    <citation type="journal article" date="2006" name="Mol. Syst. Biol.">
        <title>Highly accurate genome sequences of Escherichia coli K-12 strains MG1655 and W3110.</title>
        <authorList>
            <person name="Hayashi K."/>
            <person name="Morooka N."/>
            <person name="Yamamoto Y."/>
            <person name="Fujita K."/>
            <person name="Isono K."/>
            <person name="Choi S."/>
            <person name="Ohtsubo E."/>
            <person name="Baba T."/>
            <person name="Wanner B.L."/>
            <person name="Mori H."/>
            <person name="Horiuchi T."/>
        </authorList>
    </citation>
    <scope>NUCLEOTIDE SEQUENCE [LARGE SCALE GENOMIC DNA]</scope>
    <source>
        <strain>K12 / W3110 / ATCC 27325 / DSM 5911</strain>
    </source>
</reference>